<reference key="1">
    <citation type="submission" date="2005-08" db="EMBL/GenBank/DDBJ databases">
        <title>The NIAID influenza genome sequencing project.</title>
        <authorList>
            <person name="Ghedin E."/>
            <person name="Spiro D."/>
            <person name="Miller N."/>
            <person name="Zaborsky J."/>
            <person name="Feldblyum T."/>
            <person name="Subbu V."/>
            <person name="Shumway M."/>
            <person name="Sparenborg J."/>
            <person name="Groveman L."/>
            <person name="Halpin R."/>
            <person name="Sitz J."/>
            <person name="Koo H."/>
            <person name="Salzberg S.L."/>
            <person name="Webster R.G."/>
            <person name="Hoffmann E."/>
            <person name="Krauss S."/>
            <person name="Naeve C."/>
            <person name="Bao Y."/>
            <person name="Bolotov P."/>
            <person name="Dernovoy D."/>
            <person name="Kiryutin B."/>
            <person name="Lipman D.J."/>
            <person name="Tatusova T."/>
        </authorList>
    </citation>
    <scope>NUCLEOTIDE SEQUENCE [GENOMIC RNA]</scope>
</reference>
<gene>
    <name evidence="1" type="primary">NS</name>
</gene>
<keyword id="KW-0025">Alternative splicing</keyword>
<keyword id="KW-1048">Host nucleus</keyword>
<keyword id="KW-0945">Host-virus interaction</keyword>
<keyword id="KW-0813">Transport</keyword>
<keyword id="KW-0946">Virion</keyword>
<feature type="chain" id="PRO_0000324206" description="Nuclear export protein">
    <location>
        <begin position="1"/>
        <end position="121"/>
    </location>
</feature>
<feature type="short sequence motif" description="Nuclear export signal" evidence="1">
    <location>
        <begin position="12"/>
        <end position="21"/>
    </location>
</feature>
<feature type="short sequence motif" description="Nuclear export signal" evidence="1">
    <location>
        <begin position="85"/>
        <end position="94"/>
    </location>
</feature>
<organismHost>
    <name type="scientific">Aves</name>
    <dbReference type="NCBI Taxonomy" id="8782"/>
</organismHost>
<organismHost>
    <name type="scientific">Cetacea</name>
    <name type="common">whales</name>
    <dbReference type="NCBI Taxonomy" id="9721"/>
</organismHost>
<organismHost>
    <name type="scientific">Homo sapiens</name>
    <name type="common">Human</name>
    <dbReference type="NCBI Taxonomy" id="9606"/>
</organismHost>
<organismHost>
    <name type="scientific">Phocidae</name>
    <name type="common">true seals</name>
    <dbReference type="NCBI Taxonomy" id="9709"/>
</organismHost>
<organismHost>
    <name type="scientific">Sus scrofa</name>
    <name type="common">Pig</name>
    <dbReference type="NCBI Taxonomy" id="9823"/>
</organismHost>
<sequence>MDSNTVSSFQDILLRMSKMQLGSSSEDLNGMITQFESLKLYRDSLGEAVMRMGDLHSLQNRNGKWREQLGLKFEEIRWLIEEVRHRLKTTENSFEQITFMQALQLLFEVEQEIRTFSFQLI</sequence>
<protein>
    <recommendedName>
        <fullName evidence="1">Nuclear export protein</fullName>
        <shortName evidence="1">NEP</shortName>
    </recommendedName>
    <alternativeName>
        <fullName evidence="1">Non-structural protein 2</fullName>
        <shortName evidence="1">NS2</shortName>
    </alternativeName>
</protein>
<comment type="function">
    <text evidence="1">Mediates the nuclear export of encapsidated genomic RNAs (ribonucleoproteins, RNPs). Acts as an adapter between viral RNPs complexes and the nuclear export machinery of the cell. Possesses no intrinsic RNA-binding activity, but includes a C-terminal M1-binding domain. This domain is believed to allow recognition of RNPs bound to the protein M1. Since protein M1 is not available in large quantities before late stages of infection, such an indirect recognition mechanism probably ensures that genomic RNPs are not exported from the host nucleus until sufficient quantities of viral mRNA and progeny genomic RNA have been synthesized. Furthermore, the RNPs enter the host cytoplasm only when associated with the M1 protein that is necessary to guide them to the plasma membrane. May down-regulate viral RNA synthesis when overproduced.</text>
</comment>
<comment type="subunit">
    <text evidence="1">Interacts with protein M1. May interact with host nucleoporin RAB/HRB and exportin XPO1/CRM1.</text>
</comment>
<comment type="subcellular location">
    <subcellularLocation>
        <location evidence="1">Virion</location>
    </subcellularLocation>
    <subcellularLocation>
        <location evidence="1">Host nucleus</location>
    </subcellularLocation>
</comment>
<comment type="alternative products">
    <event type="alternative splicing"/>
    <isoform>
        <id>Q3YPZ0-1</id>
        <name>NEP</name>
        <name>NS2</name>
        <sequence type="displayed"/>
    </isoform>
    <isoform>
        <id>Q3YPY9-1</id>
        <name>NS1</name>
        <sequence type="external"/>
    </isoform>
</comment>
<comment type="similarity">
    <text evidence="1">Belongs to the influenza viruses NEP family.</text>
</comment>
<evidence type="ECO:0000255" key="1">
    <source>
        <dbReference type="HAMAP-Rule" id="MF_04067"/>
    </source>
</evidence>
<dbReference type="EMBL" id="CY002500">
    <property type="protein sequence ID" value="AAZ80013.1"/>
    <property type="molecule type" value="Genomic_RNA"/>
</dbReference>
<dbReference type="SMR" id="Q3YPZ0"/>
<dbReference type="Proteomes" id="UP000154307">
    <property type="component" value="Genome"/>
</dbReference>
<dbReference type="GO" id="GO:0042025">
    <property type="term" value="C:host cell nucleus"/>
    <property type="evidence" value="ECO:0007669"/>
    <property type="project" value="UniProtKB-SubCell"/>
</dbReference>
<dbReference type="GO" id="GO:0044423">
    <property type="term" value="C:virion component"/>
    <property type="evidence" value="ECO:0007669"/>
    <property type="project" value="UniProtKB-UniRule"/>
</dbReference>
<dbReference type="GO" id="GO:0039675">
    <property type="term" value="P:exit of virus from host cell nucleus through nuclear pore"/>
    <property type="evidence" value="ECO:0007669"/>
    <property type="project" value="UniProtKB-UniRule"/>
</dbReference>
<dbReference type="Gene3D" id="1.10.287.230">
    <property type="match status" value="1"/>
</dbReference>
<dbReference type="Gene3D" id="1.10.287.10">
    <property type="entry name" value="S15/NS1, RNA-binding"/>
    <property type="match status" value="1"/>
</dbReference>
<dbReference type="HAMAP" id="MF_04067">
    <property type="entry name" value="INFV_NEP"/>
    <property type="match status" value="1"/>
</dbReference>
<dbReference type="InterPro" id="IPR000968">
    <property type="entry name" value="Flu_NS2"/>
</dbReference>
<dbReference type="Pfam" id="PF00601">
    <property type="entry name" value="Flu_NS2"/>
    <property type="match status" value="1"/>
</dbReference>
<dbReference type="SUPFAM" id="SSF101156">
    <property type="entry name" value="Nonstructural protein ns2, Nep, M1-binding domain"/>
    <property type="match status" value="1"/>
</dbReference>
<name>NEP_I71A1</name>
<accession>Q3YPZ0</accession>
<proteinExistence type="inferred from homology"/>
<organism>
    <name type="scientific">Influenza A virus (strain A/Memphis/1/1971 H3N2)</name>
    <dbReference type="NCBI Taxonomy" id="383586"/>
    <lineage>
        <taxon>Viruses</taxon>
        <taxon>Riboviria</taxon>
        <taxon>Orthornavirae</taxon>
        <taxon>Negarnaviricota</taxon>
        <taxon>Polyploviricotina</taxon>
        <taxon>Insthoviricetes</taxon>
        <taxon>Articulavirales</taxon>
        <taxon>Orthomyxoviridae</taxon>
        <taxon>Alphainfluenzavirus</taxon>
        <taxon>Alphainfluenzavirus influenzae</taxon>
        <taxon>Influenza A virus</taxon>
    </lineage>
</organism>